<comment type="function">
    <text evidence="1">Catalyzes the conversion of 3-deoxy-D-arabino-heptulosonate 7-phosphate (DAHP) to dehydroquinate (DHQ).</text>
</comment>
<comment type="catalytic activity">
    <reaction evidence="1">
        <text>7-phospho-2-dehydro-3-deoxy-D-arabino-heptonate = 3-dehydroquinate + phosphate</text>
        <dbReference type="Rhea" id="RHEA:21968"/>
        <dbReference type="ChEBI" id="CHEBI:32364"/>
        <dbReference type="ChEBI" id="CHEBI:43474"/>
        <dbReference type="ChEBI" id="CHEBI:58394"/>
        <dbReference type="EC" id="4.2.3.4"/>
    </reaction>
</comment>
<comment type="cofactor">
    <cofactor evidence="1">
        <name>Co(2+)</name>
        <dbReference type="ChEBI" id="CHEBI:48828"/>
    </cofactor>
    <cofactor evidence="1">
        <name>Zn(2+)</name>
        <dbReference type="ChEBI" id="CHEBI:29105"/>
    </cofactor>
    <text evidence="1">Binds 1 divalent metal cation per subunit. Can use either Co(2+) or Zn(2+).</text>
</comment>
<comment type="cofactor">
    <cofactor evidence="1">
        <name>NAD(+)</name>
        <dbReference type="ChEBI" id="CHEBI:57540"/>
    </cofactor>
</comment>
<comment type="pathway">
    <text evidence="1">Metabolic intermediate biosynthesis; chorismate biosynthesis; chorismate from D-erythrose 4-phosphate and phosphoenolpyruvate: step 2/7.</text>
</comment>
<comment type="subcellular location">
    <subcellularLocation>
        <location evidence="1">Cytoplasm</location>
    </subcellularLocation>
</comment>
<comment type="similarity">
    <text evidence="1">Belongs to the sugar phosphate cyclases superfamily. Dehydroquinate synthase family.</text>
</comment>
<dbReference type="EC" id="4.2.3.4" evidence="1"/>
<dbReference type="EMBL" id="CP001011">
    <property type="protein sequence ID" value="ACB92054.1"/>
    <property type="molecule type" value="Genomic_DNA"/>
</dbReference>
<dbReference type="RefSeq" id="WP_011097704.1">
    <property type="nucleotide sequence ID" value="NC_010577.1"/>
</dbReference>
<dbReference type="SMR" id="B2I9G0"/>
<dbReference type="GeneID" id="93904296"/>
<dbReference type="KEGG" id="xfn:XfasM23_0610"/>
<dbReference type="HOGENOM" id="CLU_001201_0_2_6"/>
<dbReference type="UniPathway" id="UPA00053">
    <property type="reaction ID" value="UER00085"/>
</dbReference>
<dbReference type="Proteomes" id="UP000001698">
    <property type="component" value="Chromosome"/>
</dbReference>
<dbReference type="GO" id="GO:0005737">
    <property type="term" value="C:cytoplasm"/>
    <property type="evidence" value="ECO:0007669"/>
    <property type="project" value="UniProtKB-SubCell"/>
</dbReference>
<dbReference type="GO" id="GO:0003856">
    <property type="term" value="F:3-dehydroquinate synthase activity"/>
    <property type="evidence" value="ECO:0007669"/>
    <property type="project" value="UniProtKB-UniRule"/>
</dbReference>
<dbReference type="GO" id="GO:0046872">
    <property type="term" value="F:metal ion binding"/>
    <property type="evidence" value="ECO:0007669"/>
    <property type="project" value="UniProtKB-KW"/>
</dbReference>
<dbReference type="GO" id="GO:0000166">
    <property type="term" value="F:nucleotide binding"/>
    <property type="evidence" value="ECO:0007669"/>
    <property type="project" value="UniProtKB-KW"/>
</dbReference>
<dbReference type="GO" id="GO:0008652">
    <property type="term" value="P:amino acid biosynthetic process"/>
    <property type="evidence" value="ECO:0007669"/>
    <property type="project" value="UniProtKB-KW"/>
</dbReference>
<dbReference type="GO" id="GO:0009073">
    <property type="term" value="P:aromatic amino acid family biosynthetic process"/>
    <property type="evidence" value="ECO:0007669"/>
    <property type="project" value="UniProtKB-KW"/>
</dbReference>
<dbReference type="GO" id="GO:0009423">
    <property type="term" value="P:chorismate biosynthetic process"/>
    <property type="evidence" value="ECO:0007669"/>
    <property type="project" value="UniProtKB-UniRule"/>
</dbReference>
<dbReference type="CDD" id="cd08195">
    <property type="entry name" value="DHQS"/>
    <property type="match status" value="1"/>
</dbReference>
<dbReference type="FunFam" id="3.40.50.1970:FF:000007">
    <property type="entry name" value="Pentafunctional AROM polypeptide"/>
    <property type="match status" value="1"/>
</dbReference>
<dbReference type="Gene3D" id="3.40.50.1970">
    <property type="match status" value="1"/>
</dbReference>
<dbReference type="Gene3D" id="1.20.1090.10">
    <property type="entry name" value="Dehydroquinate synthase-like - alpha domain"/>
    <property type="match status" value="1"/>
</dbReference>
<dbReference type="HAMAP" id="MF_00110">
    <property type="entry name" value="DHQ_synthase"/>
    <property type="match status" value="1"/>
</dbReference>
<dbReference type="InterPro" id="IPR050071">
    <property type="entry name" value="Dehydroquinate_synthase"/>
</dbReference>
<dbReference type="InterPro" id="IPR016037">
    <property type="entry name" value="DHQ_synth_AroB"/>
</dbReference>
<dbReference type="InterPro" id="IPR030963">
    <property type="entry name" value="DHQ_synth_fam"/>
</dbReference>
<dbReference type="InterPro" id="IPR030960">
    <property type="entry name" value="DHQS/DOIS_N"/>
</dbReference>
<dbReference type="InterPro" id="IPR056179">
    <property type="entry name" value="DHQS_C"/>
</dbReference>
<dbReference type="NCBIfam" id="TIGR01357">
    <property type="entry name" value="aroB"/>
    <property type="match status" value="1"/>
</dbReference>
<dbReference type="PANTHER" id="PTHR43622">
    <property type="entry name" value="3-DEHYDROQUINATE SYNTHASE"/>
    <property type="match status" value="1"/>
</dbReference>
<dbReference type="PANTHER" id="PTHR43622:SF7">
    <property type="entry name" value="3-DEHYDROQUINATE SYNTHASE, CHLOROPLASTIC"/>
    <property type="match status" value="1"/>
</dbReference>
<dbReference type="Pfam" id="PF01761">
    <property type="entry name" value="DHQ_synthase"/>
    <property type="match status" value="1"/>
</dbReference>
<dbReference type="Pfam" id="PF24621">
    <property type="entry name" value="DHQS_C"/>
    <property type="match status" value="1"/>
</dbReference>
<dbReference type="PIRSF" id="PIRSF001455">
    <property type="entry name" value="DHQ_synth"/>
    <property type="match status" value="1"/>
</dbReference>
<dbReference type="SUPFAM" id="SSF56796">
    <property type="entry name" value="Dehydroquinate synthase-like"/>
    <property type="match status" value="1"/>
</dbReference>
<gene>
    <name evidence="1" type="primary">aroB</name>
    <name type="ordered locus">XfasM23_0610</name>
</gene>
<evidence type="ECO:0000255" key="1">
    <source>
        <dbReference type="HAMAP-Rule" id="MF_00110"/>
    </source>
</evidence>
<proteinExistence type="inferred from homology"/>
<protein>
    <recommendedName>
        <fullName evidence="1">3-dehydroquinate synthase</fullName>
        <shortName evidence="1">DHQS</shortName>
        <ecNumber evidence="1">4.2.3.4</ecNumber>
    </recommendedName>
</protein>
<name>AROB_XYLF2</name>
<sequence>MTTPTPLRSVTVNTPPPYTIAIGPGLLHDPPRLAATIRGRHALILSDSEVAPRYAAQLHETLLRARPDLHLNVFTLPAGETSKSLENFGAAIAQLATLGATRDACLFALGGGVIGDLAGFTAACWMRGIDYVQVPTTLLAMVDSSVGGKTAVDIPQGKNMVGAFHPPRAVIADTDTLATLPLRELRAGLSEVIKYGAIRDPVFFHWLQTTREALLARDPAALAQAIARSCEHKADIVGRDPLEKGERVLLNLGHTFGHAIETTQGYSTPGSNNLNHGEAVAVGMVLAARLSNTLGLAPAEDTETLKNLLDAYGLPTVLPSGLTPEMLLERMRLDKKNIAGRLRLVLWRGIGHAEAVPDVDEAAVRQILAN</sequence>
<reference key="1">
    <citation type="journal article" date="2010" name="J. Bacteriol.">
        <title>Whole genome sequences of two Xylella fastidiosa strains (M12 and M23) causing almond leaf scorch disease in California.</title>
        <authorList>
            <person name="Chen J."/>
            <person name="Xie G."/>
            <person name="Han S."/>
            <person name="Chertkov O."/>
            <person name="Sims D."/>
            <person name="Civerolo E.L."/>
        </authorList>
    </citation>
    <scope>NUCLEOTIDE SEQUENCE [LARGE SCALE GENOMIC DNA]</scope>
    <source>
        <strain>M23</strain>
    </source>
</reference>
<organism>
    <name type="scientific">Xylella fastidiosa (strain M23)</name>
    <dbReference type="NCBI Taxonomy" id="405441"/>
    <lineage>
        <taxon>Bacteria</taxon>
        <taxon>Pseudomonadati</taxon>
        <taxon>Pseudomonadota</taxon>
        <taxon>Gammaproteobacteria</taxon>
        <taxon>Lysobacterales</taxon>
        <taxon>Lysobacteraceae</taxon>
        <taxon>Xylella</taxon>
    </lineage>
</organism>
<accession>B2I9G0</accession>
<feature type="chain" id="PRO_1000094656" description="3-dehydroquinate synthase">
    <location>
        <begin position="1"/>
        <end position="370"/>
    </location>
</feature>
<feature type="binding site" evidence="1">
    <location>
        <begin position="112"/>
        <end position="116"/>
    </location>
    <ligand>
        <name>NAD(+)</name>
        <dbReference type="ChEBI" id="CHEBI:57540"/>
    </ligand>
</feature>
<feature type="binding site" evidence="1">
    <location>
        <begin position="136"/>
        <end position="137"/>
    </location>
    <ligand>
        <name>NAD(+)</name>
        <dbReference type="ChEBI" id="CHEBI:57540"/>
    </ligand>
</feature>
<feature type="binding site" evidence="1">
    <location>
        <position position="149"/>
    </location>
    <ligand>
        <name>NAD(+)</name>
        <dbReference type="ChEBI" id="CHEBI:57540"/>
    </ligand>
</feature>
<feature type="binding site" evidence="1">
    <location>
        <position position="158"/>
    </location>
    <ligand>
        <name>NAD(+)</name>
        <dbReference type="ChEBI" id="CHEBI:57540"/>
    </ligand>
</feature>
<feature type="binding site" evidence="1">
    <location>
        <begin position="176"/>
        <end position="179"/>
    </location>
    <ligand>
        <name>NAD(+)</name>
        <dbReference type="ChEBI" id="CHEBI:57540"/>
    </ligand>
</feature>
<feature type="binding site" evidence="1">
    <location>
        <position position="191"/>
    </location>
    <ligand>
        <name>Zn(2+)</name>
        <dbReference type="ChEBI" id="CHEBI:29105"/>
    </ligand>
</feature>
<feature type="binding site" evidence="1">
    <location>
        <position position="254"/>
    </location>
    <ligand>
        <name>Zn(2+)</name>
        <dbReference type="ChEBI" id="CHEBI:29105"/>
    </ligand>
</feature>
<feature type="binding site" evidence="1">
    <location>
        <position position="276"/>
    </location>
    <ligand>
        <name>Zn(2+)</name>
        <dbReference type="ChEBI" id="CHEBI:29105"/>
    </ligand>
</feature>
<keyword id="KW-0028">Amino-acid biosynthesis</keyword>
<keyword id="KW-0057">Aromatic amino acid biosynthesis</keyword>
<keyword id="KW-0170">Cobalt</keyword>
<keyword id="KW-0963">Cytoplasm</keyword>
<keyword id="KW-0456">Lyase</keyword>
<keyword id="KW-0479">Metal-binding</keyword>
<keyword id="KW-0520">NAD</keyword>
<keyword id="KW-0547">Nucleotide-binding</keyword>
<keyword id="KW-0862">Zinc</keyword>